<protein>
    <recommendedName>
        <fullName>Phytanoyl-CoA dioxygenase domain-containing protein 1 homolog</fullName>
        <ecNumber>1.-.-.-</ecNumber>
    </recommendedName>
</protein>
<feature type="chain" id="PRO_0000313637" description="Phytanoyl-CoA dioxygenase domain-containing protein 1 homolog">
    <location>
        <begin position="1"/>
        <end position="288"/>
    </location>
</feature>
<feature type="binding site" evidence="1">
    <location>
        <position position="95"/>
    </location>
    <ligand>
        <name>2-oxoglutarate</name>
        <dbReference type="ChEBI" id="CHEBI:16810"/>
    </ligand>
</feature>
<feature type="binding site" evidence="1">
    <location>
        <position position="134"/>
    </location>
    <ligand>
        <name>2-oxoglutarate</name>
        <dbReference type="ChEBI" id="CHEBI:16810"/>
    </ligand>
</feature>
<feature type="binding site" evidence="1">
    <location>
        <begin position="149"/>
        <end position="151"/>
    </location>
    <ligand>
        <name>2-oxoglutarate</name>
        <dbReference type="ChEBI" id="CHEBI:16810"/>
    </ligand>
</feature>
<feature type="binding site" evidence="1">
    <location>
        <position position="149"/>
    </location>
    <ligand>
        <name>Fe cation</name>
        <dbReference type="ChEBI" id="CHEBI:24875"/>
    </ligand>
</feature>
<feature type="binding site" evidence="1">
    <location>
        <position position="151"/>
    </location>
    <ligand>
        <name>Fe cation</name>
        <dbReference type="ChEBI" id="CHEBI:24875"/>
    </ligand>
</feature>
<feature type="binding site" evidence="1">
    <location>
        <position position="167"/>
    </location>
    <ligand>
        <name>2-oxoglutarate</name>
        <dbReference type="ChEBI" id="CHEBI:16810"/>
    </ligand>
</feature>
<feature type="binding site" evidence="1">
    <location>
        <position position="242"/>
    </location>
    <ligand>
        <name>Fe cation</name>
        <dbReference type="ChEBI" id="CHEBI:24875"/>
    </ligand>
</feature>
<feature type="binding site" evidence="1">
    <location>
        <position position="244"/>
    </location>
    <ligand>
        <name>2-oxoglutarate</name>
        <dbReference type="ChEBI" id="CHEBI:16810"/>
    </ligand>
</feature>
<feature type="binding site" evidence="1">
    <location>
        <position position="253"/>
    </location>
    <ligand>
        <name>2-oxoglutarate</name>
        <dbReference type="ChEBI" id="CHEBI:16810"/>
    </ligand>
</feature>
<reference key="1">
    <citation type="journal article" date="2003" name="PLoS Biol.">
        <title>The genome sequence of Caenorhabditis briggsae: a platform for comparative genomics.</title>
        <authorList>
            <person name="Stein L.D."/>
            <person name="Bao Z."/>
            <person name="Blasiar D."/>
            <person name="Blumenthal T."/>
            <person name="Brent M.R."/>
            <person name="Chen N."/>
            <person name="Chinwalla A."/>
            <person name="Clarke L."/>
            <person name="Clee C."/>
            <person name="Coghlan A."/>
            <person name="Coulson A."/>
            <person name="D'Eustachio P."/>
            <person name="Fitch D.H.A."/>
            <person name="Fulton L.A."/>
            <person name="Fulton R.E."/>
            <person name="Griffiths-Jones S."/>
            <person name="Harris T.W."/>
            <person name="Hillier L.W."/>
            <person name="Kamath R."/>
            <person name="Kuwabara P.E."/>
            <person name="Mardis E.R."/>
            <person name="Marra M.A."/>
            <person name="Miner T.L."/>
            <person name="Minx P."/>
            <person name="Mullikin J.C."/>
            <person name="Plumb R.W."/>
            <person name="Rogers J."/>
            <person name="Schein J.E."/>
            <person name="Sohrmann M."/>
            <person name="Spieth J."/>
            <person name="Stajich J.E."/>
            <person name="Wei C."/>
            <person name="Willey D."/>
            <person name="Wilson R.K."/>
            <person name="Durbin R.M."/>
            <person name="Waterston R.H."/>
        </authorList>
    </citation>
    <scope>NUCLEOTIDE SEQUENCE [LARGE SCALE GENOMIC DNA]</scope>
    <source>
        <strain>AF16</strain>
    </source>
</reference>
<gene>
    <name type="ORF">CBG00325</name>
</gene>
<keyword id="KW-0223">Dioxygenase</keyword>
<keyword id="KW-0408">Iron</keyword>
<keyword id="KW-0479">Metal-binding</keyword>
<keyword id="KW-0560">Oxidoreductase</keyword>
<keyword id="KW-1185">Reference proteome</keyword>
<accession>P0C660</accession>
<accession>A8WMU1</accession>
<dbReference type="EC" id="1.-.-.-"/>
<dbReference type="EMBL" id="HE600968">
    <property type="protein sequence ID" value="CAP21796.1"/>
    <property type="molecule type" value="Genomic_DNA"/>
</dbReference>
<dbReference type="RefSeq" id="XP_002632320.1">
    <property type="nucleotide sequence ID" value="XM_002632274.1"/>
</dbReference>
<dbReference type="SMR" id="P0C660"/>
<dbReference type="FunCoup" id="P0C660">
    <property type="interactions" value="575"/>
</dbReference>
<dbReference type="STRING" id="6238.P0C660"/>
<dbReference type="EnsemblMetazoa" id="CBG00325.1">
    <property type="protein sequence ID" value="CBG00325.1"/>
    <property type="gene ID" value="WBGene00023733"/>
</dbReference>
<dbReference type="GeneID" id="8574317"/>
<dbReference type="KEGG" id="cbr:CBG_00325"/>
<dbReference type="CTD" id="8574317"/>
<dbReference type="WormBase" id="CBG00325">
    <property type="protein sequence ID" value="CBP05721"/>
    <property type="gene ID" value="WBGene00023733"/>
</dbReference>
<dbReference type="eggNOG" id="KOG3290">
    <property type="taxonomic scope" value="Eukaryota"/>
</dbReference>
<dbReference type="HOGENOM" id="CLU_048953_0_0_1"/>
<dbReference type="InParanoid" id="P0C660"/>
<dbReference type="OMA" id="KYSEDNW"/>
<dbReference type="Proteomes" id="UP000008549">
    <property type="component" value="Unassembled WGS sequence"/>
</dbReference>
<dbReference type="GO" id="GO:0051213">
    <property type="term" value="F:dioxygenase activity"/>
    <property type="evidence" value="ECO:0007669"/>
    <property type="project" value="UniProtKB-KW"/>
</dbReference>
<dbReference type="GO" id="GO:0046872">
    <property type="term" value="F:metal ion binding"/>
    <property type="evidence" value="ECO:0007669"/>
    <property type="project" value="UniProtKB-KW"/>
</dbReference>
<dbReference type="Gene3D" id="2.60.120.620">
    <property type="entry name" value="q2cbj1_9rhob like domain"/>
    <property type="match status" value="1"/>
</dbReference>
<dbReference type="InterPro" id="IPR008775">
    <property type="entry name" value="Phytyl_CoA_dOase-like"/>
</dbReference>
<dbReference type="PANTHER" id="PTHR20883">
    <property type="entry name" value="PHYTANOYL-COA DIOXYGENASE DOMAIN CONTAINING 1"/>
    <property type="match status" value="1"/>
</dbReference>
<dbReference type="PANTHER" id="PTHR20883:SF15">
    <property type="entry name" value="PHYTANOYL-COA DIOXYGENASE DOMAIN-CONTAINING PROTEIN 1"/>
    <property type="match status" value="1"/>
</dbReference>
<dbReference type="Pfam" id="PF05721">
    <property type="entry name" value="PhyH"/>
    <property type="match status" value="1"/>
</dbReference>
<dbReference type="SUPFAM" id="SSF51197">
    <property type="entry name" value="Clavaminate synthase-like"/>
    <property type="match status" value="1"/>
</dbReference>
<name>PHYD1_CAEBR</name>
<organism>
    <name type="scientific">Caenorhabditis briggsae</name>
    <dbReference type="NCBI Taxonomy" id="6238"/>
    <lineage>
        <taxon>Eukaryota</taxon>
        <taxon>Metazoa</taxon>
        <taxon>Ecdysozoa</taxon>
        <taxon>Nematoda</taxon>
        <taxon>Chromadorea</taxon>
        <taxon>Rhabditida</taxon>
        <taxon>Rhabditina</taxon>
        <taxon>Rhabditomorpha</taxon>
        <taxon>Rhabditoidea</taxon>
        <taxon>Rhabditidae</taxon>
        <taxon>Peloderinae</taxon>
        <taxon>Caenorhabditis</taxon>
    </lineage>
</organism>
<comment type="function">
    <text evidence="1">Has alpha-ketoglutarate-dependent dioxygenase activity. Does not show detectable activity towards fatty acid CoA thioesters. Is not expected to be active with phytanoyl CoA (By similarity).</text>
</comment>
<comment type="cofactor">
    <cofactor evidence="1">
        <name>Fe cation</name>
        <dbReference type="ChEBI" id="CHEBI:24875"/>
    </cofactor>
</comment>
<comment type="similarity">
    <text evidence="2">Belongs to the PhyH family. PHYHD1 subfamily.</text>
</comment>
<proteinExistence type="inferred from homology"/>
<sequence length="288" mass="32833">MSDLRQNFERDGFVVIENVFNDQEIEEIKGAIGKIVEDMNLAEHPKSVFSTYDEDKHAADSYFLNSSDKIRFFFEEGAVDKDGELTVPKDKALNKIGHGLHLLDPTFKKMTFNSKIQKIFQGIGYQEPEVVQSMYIFKQPKIGGAVTDHVDSTFLRVNPIDHLTGVWIAIDEASVENGCLSFIPGSHKDTSTSDYRFVRTHDTTGGPLLKFIGTRPTYDQSKFQHVPISKGSLILIHGLVVHKSEANTSDKSRHAYTIHVMEKQNTEWSKDNWLQETEQYKFPNLYKQ</sequence>
<evidence type="ECO:0000250" key="1"/>
<evidence type="ECO:0000305" key="2"/>